<sequence length="89" mass="10035">MACPLDQAIGLLVAIFHKYSGKEGDKHTLSKKELKELIQKELTIGAKLQDAEIARLMDDLDRNKDQEVNFQEYVAFLGALALIYNEALK</sequence>
<proteinExistence type="evidence at protein level"/>
<feature type="chain" id="PRO_0000143987" description="Protein S100-A6">
    <location>
        <begin position="1"/>
        <end position="89"/>
    </location>
</feature>
<feature type="domain" description="EF-hand 1" evidence="5">
    <location>
        <begin position="12"/>
        <end position="47"/>
    </location>
</feature>
<feature type="domain" description="EF-hand 2" evidence="4">
    <location>
        <begin position="48"/>
        <end position="83"/>
    </location>
</feature>
<feature type="binding site" evidence="5">
    <location>
        <position position="28"/>
    </location>
    <ligand>
        <name>Ca(2+)</name>
        <dbReference type="ChEBI" id="CHEBI:29108"/>
        <label>1</label>
    </ligand>
</feature>
<feature type="binding site" evidence="5">
    <location>
        <position position="33"/>
    </location>
    <ligand>
        <name>Ca(2+)</name>
        <dbReference type="ChEBI" id="CHEBI:29108"/>
        <label>1</label>
    </ligand>
</feature>
<feature type="binding site" evidence="4">
    <location>
        <position position="61"/>
    </location>
    <ligand>
        <name>Ca(2+)</name>
        <dbReference type="ChEBI" id="CHEBI:29108"/>
        <label>2</label>
    </ligand>
</feature>
<feature type="binding site" evidence="4">
    <location>
        <position position="63"/>
    </location>
    <ligand>
        <name>Ca(2+)</name>
        <dbReference type="ChEBI" id="CHEBI:29108"/>
        <label>2</label>
    </ligand>
</feature>
<feature type="binding site" evidence="4">
    <location>
        <position position="65"/>
    </location>
    <ligand>
        <name>Ca(2+)</name>
        <dbReference type="ChEBI" id="CHEBI:29108"/>
        <label>2</label>
    </ligand>
</feature>
<feature type="binding site" evidence="4">
    <location>
        <position position="67"/>
    </location>
    <ligand>
        <name>Ca(2+)</name>
        <dbReference type="ChEBI" id="CHEBI:29108"/>
        <label>2</label>
    </ligand>
</feature>
<feature type="binding site" evidence="4">
    <location>
        <position position="72"/>
    </location>
    <ligand>
        <name>Ca(2+)</name>
        <dbReference type="ChEBI" id="CHEBI:29108"/>
        <label>2</label>
    </ligand>
</feature>
<feature type="modified residue" description="N6-acetyllysine" evidence="2">
    <location>
        <position position="40"/>
    </location>
</feature>
<feature type="modified residue" description="N6-acetyllysine; alternate" evidence="3">
    <location>
        <position position="47"/>
    </location>
</feature>
<feature type="modified residue" description="N6-succinyllysine; alternate" evidence="3">
    <location>
        <position position="47"/>
    </location>
</feature>
<feature type="sequence conflict" description="In Ref. 1; no nucleotide entry." evidence="5" ref="1">
    <original>K</original>
    <variation>KG</variation>
    <location>
        <position position="89"/>
    </location>
</feature>
<reference key="1">
    <citation type="journal article" date="1988" name="J. Biol. Chem.">
        <title>Cloning and characterization of a cDNA encoding a highly conserved, putative calcium binding protein, identified by an anti-prolactin receptor antiserum.</title>
        <authorList>
            <person name="Murphy L.C."/>
            <person name="Murphy L.J."/>
            <person name="Tsuyuki D."/>
            <person name="Duckworth M.L."/>
            <person name="Shiu R.P.C."/>
        </authorList>
    </citation>
    <scope>NUCLEOTIDE SEQUENCE [MRNA]</scope>
</reference>
<reference key="2">
    <citation type="journal article" date="1999" name="Biochim. Biophys. Acta">
        <title>Calcyclin is differentially expressed in rat testicular cells.</title>
        <authorList>
            <person name="Konrad L."/>
            <person name="Aumueller G."/>
        </authorList>
    </citation>
    <scope>NUCLEOTIDE SEQUENCE [MRNA]</scope>
    <source>
        <strain>Wistar</strain>
    </source>
</reference>
<reference key="3">
    <citation type="submission" date="1999-04" db="EMBL/GenBank/DDBJ databases">
        <authorList>
            <person name="Kizawa K."/>
        </authorList>
    </citation>
    <scope>NUCLEOTIDE SEQUENCE [MRNA]</scope>
    <source>
        <strain>Wistar</strain>
    </source>
</reference>
<reference key="4">
    <citation type="submission" date="2007-09" db="UniProtKB">
        <authorList>
            <person name="Lubec G."/>
            <person name="Kang S.U."/>
            <person name="Lubec S."/>
        </authorList>
    </citation>
    <scope>PROTEIN SEQUENCE OF 48-55</scope>
    <scope>IDENTIFICATION BY MASS SPECTROMETRY</scope>
    <source>
        <strain>Sprague-Dawley</strain>
        <tissue>Brain</tissue>
    </source>
</reference>
<dbReference type="EMBL" id="AJ132717">
    <property type="protein sequence ID" value="CAB42002.1"/>
    <property type="molecule type" value="mRNA"/>
</dbReference>
<dbReference type="EMBL" id="AF140232">
    <property type="protein sequence ID" value="AAK28306.1"/>
    <property type="molecule type" value="mRNA"/>
</dbReference>
<dbReference type="PIR" id="B28363">
    <property type="entry name" value="B28363"/>
</dbReference>
<dbReference type="RefSeq" id="NP_445937.1">
    <property type="nucleotide sequence ID" value="NM_053485.2"/>
</dbReference>
<dbReference type="RefSeq" id="XP_006232841.1">
    <property type="nucleotide sequence ID" value="XM_006232779.5"/>
</dbReference>
<dbReference type="RefSeq" id="XP_038959201.1">
    <property type="nucleotide sequence ID" value="XM_039103273.2"/>
</dbReference>
<dbReference type="SMR" id="P05964"/>
<dbReference type="BioGRID" id="250051">
    <property type="interactions" value="2"/>
</dbReference>
<dbReference type="FunCoup" id="P05964">
    <property type="interactions" value="281"/>
</dbReference>
<dbReference type="IntAct" id="P05964">
    <property type="interactions" value="2"/>
</dbReference>
<dbReference type="STRING" id="10116.ENSRNOP00000015612"/>
<dbReference type="iPTMnet" id="P05964"/>
<dbReference type="PhosphoSitePlus" id="P05964"/>
<dbReference type="jPOST" id="P05964"/>
<dbReference type="PaxDb" id="10116-ENSRNOP00000015612"/>
<dbReference type="Ensembl" id="ENSRNOT00000015612.6">
    <property type="protein sequence ID" value="ENSRNOP00000015612.2"/>
    <property type="gene ID" value="ENSRNOG00000011647.6"/>
</dbReference>
<dbReference type="GeneID" id="85247"/>
<dbReference type="KEGG" id="rno:85247"/>
<dbReference type="UCSC" id="RGD:620264">
    <property type="organism name" value="rat"/>
</dbReference>
<dbReference type="AGR" id="RGD:620264"/>
<dbReference type="CTD" id="6277"/>
<dbReference type="RGD" id="620264">
    <property type="gene designation" value="S100a6"/>
</dbReference>
<dbReference type="eggNOG" id="ENOG502S6IN">
    <property type="taxonomic scope" value="Eukaryota"/>
</dbReference>
<dbReference type="GeneTree" id="ENSGT00940000161896"/>
<dbReference type="HOGENOM" id="CLU_138624_2_0_1"/>
<dbReference type="InParanoid" id="P05964"/>
<dbReference type="OMA" id="LVVICHK"/>
<dbReference type="OrthoDB" id="8881129at2759"/>
<dbReference type="PhylomeDB" id="P05964"/>
<dbReference type="TreeFam" id="TF332727"/>
<dbReference type="PRO" id="PR:P05964"/>
<dbReference type="Proteomes" id="UP000002494">
    <property type="component" value="Chromosome 2"/>
</dbReference>
<dbReference type="Bgee" id="ENSRNOG00000011647">
    <property type="expression patterns" value="Expressed in stomach and 19 other cell types or tissues"/>
</dbReference>
<dbReference type="ExpressionAtlas" id="P05964">
    <property type="expression patterns" value="baseline and differential"/>
</dbReference>
<dbReference type="GO" id="GO:0005737">
    <property type="term" value="C:cytoplasm"/>
    <property type="evidence" value="ECO:0000266"/>
    <property type="project" value="RGD"/>
</dbReference>
<dbReference type="GO" id="GO:0009898">
    <property type="term" value="C:cytoplasmic side of plasma membrane"/>
    <property type="evidence" value="ECO:0000250"/>
    <property type="project" value="UniProtKB"/>
</dbReference>
<dbReference type="GO" id="GO:0005829">
    <property type="term" value="C:cytosol"/>
    <property type="evidence" value="ECO:0000250"/>
    <property type="project" value="UniProtKB"/>
</dbReference>
<dbReference type="GO" id="GO:0005635">
    <property type="term" value="C:nuclear envelope"/>
    <property type="evidence" value="ECO:0000266"/>
    <property type="project" value="RGD"/>
</dbReference>
<dbReference type="GO" id="GO:0005634">
    <property type="term" value="C:nucleus"/>
    <property type="evidence" value="ECO:0000266"/>
    <property type="project" value="RGD"/>
</dbReference>
<dbReference type="GO" id="GO:0048471">
    <property type="term" value="C:perinuclear region of cytoplasm"/>
    <property type="evidence" value="ECO:0000266"/>
    <property type="project" value="RGD"/>
</dbReference>
<dbReference type="GO" id="GO:0001726">
    <property type="term" value="C:ruffle"/>
    <property type="evidence" value="ECO:0000266"/>
    <property type="project" value="RGD"/>
</dbReference>
<dbReference type="GO" id="GO:0005509">
    <property type="term" value="F:calcium ion binding"/>
    <property type="evidence" value="ECO:0000314"/>
    <property type="project" value="RGD"/>
</dbReference>
<dbReference type="GO" id="GO:0048306">
    <property type="term" value="F:calcium-dependent protein binding"/>
    <property type="evidence" value="ECO:0000266"/>
    <property type="project" value="RGD"/>
</dbReference>
<dbReference type="GO" id="GO:0015075">
    <property type="term" value="F:monoatomic ion transmembrane transporter activity"/>
    <property type="evidence" value="ECO:0000314"/>
    <property type="project" value="RGD"/>
</dbReference>
<dbReference type="GO" id="GO:0042803">
    <property type="term" value="F:protein homodimerization activity"/>
    <property type="evidence" value="ECO:0000266"/>
    <property type="project" value="RGD"/>
</dbReference>
<dbReference type="GO" id="GO:0044548">
    <property type="term" value="F:S100 protein binding"/>
    <property type="evidence" value="ECO:0000266"/>
    <property type="project" value="RGD"/>
</dbReference>
<dbReference type="GO" id="GO:0005523">
    <property type="term" value="F:tropomyosin binding"/>
    <property type="evidence" value="ECO:0000266"/>
    <property type="project" value="RGD"/>
</dbReference>
<dbReference type="GO" id="GO:0008270">
    <property type="term" value="F:zinc ion binding"/>
    <property type="evidence" value="ECO:0000266"/>
    <property type="project" value="RGD"/>
</dbReference>
<dbReference type="GO" id="GO:0098586">
    <property type="term" value="P:cellular response to virus"/>
    <property type="evidence" value="ECO:0000266"/>
    <property type="project" value="RGD"/>
</dbReference>
<dbReference type="CDD" id="cd05029">
    <property type="entry name" value="S-100A6"/>
    <property type="match status" value="1"/>
</dbReference>
<dbReference type="FunFam" id="1.10.238.10:FF:000044">
    <property type="entry name" value="Protein S100"/>
    <property type="match status" value="1"/>
</dbReference>
<dbReference type="Gene3D" id="1.10.238.10">
    <property type="entry name" value="EF-hand"/>
    <property type="match status" value="1"/>
</dbReference>
<dbReference type="InterPro" id="IPR011992">
    <property type="entry name" value="EF-hand-dom_pair"/>
</dbReference>
<dbReference type="InterPro" id="IPR018247">
    <property type="entry name" value="EF_Hand_1_Ca_BS"/>
</dbReference>
<dbReference type="InterPro" id="IPR002048">
    <property type="entry name" value="EF_hand_dom"/>
</dbReference>
<dbReference type="InterPro" id="IPR034118">
    <property type="entry name" value="S-100A6"/>
</dbReference>
<dbReference type="InterPro" id="IPR001751">
    <property type="entry name" value="S100/CaBP7/8-like_CS"/>
</dbReference>
<dbReference type="InterPro" id="IPR013787">
    <property type="entry name" value="S100_Ca-bd_sub"/>
</dbReference>
<dbReference type="PANTHER" id="PTHR11639:SF80">
    <property type="entry name" value="PROTEIN S100-A6"/>
    <property type="match status" value="1"/>
</dbReference>
<dbReference type="PANTHER" id="PTHR11639">
    <property type="entry name" value="S100 CALCIUM-BINDING PROTEIN"/>
    <property type="match status" value="1"/>
</dbReference>
<dbReference type="Pfam" id="PF01023">
    <property type="entry name" value="S_100"/>
    <property type="match status" value="1"/>
</dbReference>
<dbReference type="SMART" id="SM00054">
    <property type="entry name" value="EFh"/>
    <property type="match status" value="1"/>
</dbReference>
<dbReference type="SMART" id="SM01394">
    <property type="entry name" value="S_100"/>
    <property type="match status" value="1"/>
</dbReference>
<dbReference type="SUPFAM" id="SSF47473">
    <property type="entry name" value="EF-hand"/>
    <property type="match status" value="1"/>
</dbReference>
<dbReference type="PROSITE" id="PS00018">
    <property type="entry name" value="EF_HAND_1"/>
    <property type="match status" value="1"/>
</dbReference>
<dbReference type="PROSITE" id="PS50222">
    <property type="entry name" value="EF_HAND_2"/>
    <property type="match status" value="1"/>
</dbReference>
<dbReference type="PROSITE" id="PS00303">
    <property type="entry name" value="S100_CABP"/>
    <property type="match status" value="1"/>
</dbReference>
<gene>
    <name type="primary">S100a6</name>
    <name type="synonym">Cacy</name>
</gene>
<name>S10A6_RAT</name>
<keyword id="KW-0007">Acetylation</keyword>
<keyword id="KW-0106">Calcium</keyword>
<keyword id="KW-1003">Cell membrane</keyword>
<keyword id="KW-0963">Cytoplasm</keyword>
<keyword id="KW-0903">Direct protein sequencing</keyword>
<keyword id="KW-0472">Membrane</keyword>
<keyword id="KW-0479">Metal-binding</keyword>
<keyword id="KW-0539">Nucleus</keyword>
<keyword id="KW-1185">Reference proteome</keyword>
<keyword id="KW-0677">Repeat</keyword>
<evidence type="ECO:0000250" key="1"/>
<evidence type="ECO:0000250" key="2">
    <source>
        <dbReference type="UniProtKB" id="P06703"/>
    </source>
</evidence>
<evidence type="ECO:0000250" key="3">
    <source>
        <dbReference type="UniProtKB" id="P14069"/>
    </source>
</evidence>
<evidence type="ECO:0000255" key="4">
    <source>
        <dbReference type="PROSITE-ProRule" id="PRU00448"/>
    </source>
</evidence>
<evidence type="ECO:0000305" key="5"/>
<protein>
    <recommendedName>
        <fullName>Protein S100-A6</fullName>
    </recommendedName>
    <alternativeName>
        <fullName>Calcyclin</fullName>
    </alternativeName>
    <alternativeName>
        <fullName>Prolactin receptor-associated protein</fullName>
    </alternativeName>
    <alternativeName>
        <fullName>S100 calcium-binding protein A6</fullName>
    </alternativeName>
</protein>
<comment type="function">
    <text evidence="1">May function as calcium sensor and modulator, contributing to cellular calcium signaling. May function by interacting with other proteins, such as TPR-containing proteins, and indirectly play a role in many physiological processes such as the reorganization of the actin cytoskeleton and in cell motility. Binds 2 calcium ions. Calcium binding is cooperative (By similarity).</text>
</comment>
<comment type="subunit">
    <text evidence="1">Homodimer; head to tail assembly of 2 subunits. Interacts with CACYBP in a calcium-dependent manner. Interacts with ANXA2 and ANXA11 (via N-terminus). Interacts with SUGT1. Interacts with TP53; has higher affinity for TP53 that is phosphorylated on its N-terminal domain, and lower affinity for TP53 that is phosphorylated on its C-terminal domain. Interacts with tropomyosin. Interacts with FKBP4. Interacts with PPP5C (via TPR repeats); the interaction is calcium-dependent and modulates PPP5C activity. Interacts with TPPP; this interaction inhibits TPPP dimerization (By similarity).</text>
</comment>
<comment type="subcellular location">
    <subcellularLocation>
        <location evidence="1">Nucleus envelope</location>
    </subcellularLocation>
    <subcellularLocation>
        <location evidence="1">Cytoplasm</location>
    </subcellularLocation>
    <subcellularLocation>
        <location evidence="1">Cell membrane</location>
        <topology evidence="1">Peripheral membrane protein</topology>
        <orientation evidence="1">Cytoplasmic side</orientation>
    </subcellularLocation>
</comment>
<comment type="miscellaneous">
    <text>This protein co-purified with the prolactin receptor.</text>
</comment>
<comment type="similarity">
    <text evidence="5">Belongs to the S-100 family.</text>
</comment>
<accession>P05964</accession>
<accession>Q9R2B7</accession>
<organism>
    <name type="scientific">Rattus norvegicus</name>
    <name type="common">Rat</name>
    <dbReference type="NCBI Taxonomy" id="10116"/>
    <lineage>
        <taxon>Eukaryota</taxon>
        <taxon>Metazoa</taxon>
        <taxon>Chordata</taxon>
        <taxon>Craniata</taxon>
        <taxon>Vertebrata</taxon>
        <taxon>Euteleostomi</taxon>
        <taxon>Mammalia</taxon>
        <taxon>Eutheria</taxon>
        <taxon>Euarchontoglires</taxon>
        <taxon>Glires</taxon>
        <taxon>Rodentia</taxon>
        <taxon>Myomorpha</taxon>
        <taxon>Muroidea</taxon>
        <taxon>Muridae</taxon>
        <taxon>Murinae</taxon>
        <taxon>Rattus</taxon>
    </lineage>
</organism>